<keyword id="KW-0012">Acyltransferase</keyword>
<keyword id="KW-0028">Amino-acid biosynthesis</keyword>
<keyword id="KW-0963">Cytoplasm</keyword>
<keyword id="KW-0220">Diaminopimelate biosynthesis</keyword>
<keyword id="KW-0457">Lysine biosynthesis</keyword>
<keyword id="KW-0677">Repeat</keyword>
<keyword id="KW-0808">Transferase</keyword>
<gene>
    <name evidence="1" type="primary">dapD</name>
    <name type="ordered locus">SG1946</name>
</gene>
<proteinExistence type="inferred from homology"/>
<dbReference type="EC" id="2.3.1.117" evidence="1"/>
<dbReference type="EMBL" id="AP008232">
    <property type="protein sequence ID" value="BAE75221.1"/>
    <property type="molecule type" value="Genomic_DNA"/>
</dbReference>
<dbReference type="RefSeq" id="WP_011411677.1">
    <property type="nucleotide sequence ID" value="NC_007712.1"/>
</dbReference>
<dbReference type="SMR" id="Q2NRK4"/>
<dbReference type="STRING" id="343509.SG1946"/>
<dbReference type="KEGG" id="sgl:SG1946"/>
<dbReference type="eggNOG" id="COG2171">
    <property type="taxonomic scope" value="Bacteria"/>
</dbReference>
<dbReference type="HOGENOM" id="CLU_050859_0_1_6"/>
<dbReference type="OrthoDB" id="9775362at2"/>
<dbReference type="BioCyc" id="SGLO343509:SGP1_RS17855-MONOMER"/>
<dbReference type="UniPathway" id="UPA00034">
    <property type="reaction ID" value="UER00019"/>
</dbReference>
<dbReference type="Proteomes" id="UP000001932">
    <property type="component" value="Chromosome"/>
</dbReference>
<dbReference type="GO" id="GO:0005737">
    <property type="term" value="C:cytoplasm"/>
    <property type="evidence" value="ECO:0007669"/>
    <property type="project" value="UniProtKB-SubCell"/>
</dbReference>
<dbReference type="GO" id="GO:0008666">
    <property type="term" value="F:2,3,4,5-tetrahydropyridine-2,6-dicarboxylate N-succinyltransferase activity"/>
    <property type="evidence" value="ECO:0007669"/>
    <property type="project" value="UniProtKB-UniRule"/>
</dbReference>
<dbReference type="GO" id="GO:0016779">
    <property type="term" value="F:nucleotidyltransferase activity"/>
    <property type="evidence" value="ECO:0007669"/>
    <property type="project" value="TreeGrafter"/>
</dbReference>
<dbReference type="GO" id="GO:0019877">
    <property type="term" value="P:diaminopimelate biosynthetic process"/>
    <property type="evidence" value="ECO:0007669"/>
    <property type="project" value="UniProtKB-UniRule"/>
</dbReference>
<dbReference type="GO" id="GO:0009089">
    <property type="term" value="P:lysine biosynthetic process via diaminopimelate"/>
    <property type="evidence" value="ECO:0007669"/>
    <property type="project" value="UniProtKB-UniRule"/>
</dbReference>
<dbReference type="CDD" id="cd03350">
    <property type="entry name" value="LbH_THP_succinylT"/>
    <property type="match status" value="1"/>
</dbReference>
<dbReference type="FunFam" id="2.160.10.10:FF:000004">
    <property type="entry name" value="2,3,4,5-tetrahydropyridine-2,6-dicarboxylate N-succinyltransferase"/>
    <property type="match status" value="1"/>
</dbReference>
<dbReference type="Gene3D" id="2.160.10.10">
    <property type="entry name" value="Hexapeptide repeat proteins"/>
    <property type="match status" value="1"/>
</dbReference>
<dbReference type="Gene3D" id="1.10.166.10">
    <property type="entry name" value="Tetrahydrodipicolinate-N-succinyltransferase, N-terminal domain"/>
    <property type="match status" value="1"/>
</dbReference>
<dbReference type="HAMAP" id="MF_00811">
    <property type="entry name" value="DapD"/>
    <property type="match status" value="1"/>
</dbReference>
<dbReference type="InterPro" id="IPR005664">
    <property type="entry name" value="DapD_Trfase_Hexpep_rpt_fam"/>
</dbReference>
<dbReference type="InterPro" id="IPR001451">
    <property type="entry name" value="Hexapep"/>
</dbReference>
<dbReference type="InterPro" id="IPR023180">
    <property type="entry name" value="THP_succinylTrfase_dom1"/>
</dbReference>
<dbReference type="InterPro" id="IPR037133">
    <property type="entry name" value="THP_succinylTrfase_N_sf"/>
</dbReference>
<dbReference type="InterPro" id="IPR011004">
    <property type="entry name" value="Trimer_LpxA-like_sf"/>
</dbReference>
<dbReference type="NCBIfam" id="TIGR00965">
    <property type="entry name" value="dapD"/>
    <property type="match status" value="1"/>
</dbReference>
<dbReference type="NCBIfam" id="NF008808">
    <property type="entry name" value="PRK11830.1"/>
    <property type="match status" value="1"/>
</dbReference>
<dbReference type="PANTHER" id="PTHR19136:SF52">
    <property type="entry name" value="2,3,4,5-TETRAHYDROPYRIDINE-2,6-DICARBOXYLATE N-SUCCINYLTRANSFERASE"/>
    <property type="match status" value="1"/>
</dbReference>
<dbReference type="PANTHER" id="PTHR19136">
    <property type="entry name" value="MOLYBDENUM COFACTOR GUANYLYLTRANSFERASE"/>
    <property type="match status" value="1"/>
</dbReference>
<dbReference type="Pfam" id="PF14602">
    <property type="entry name" value="Hexapep_2"/>
    <property type="match status" value="1"/>
</dbReference>
<dbReference type="Pfam" id="PF14805">
    <property type="entry name" value="THDPS_N_2"/>
    <property type="match status" value="1"/>
</dbReference>
<dbReference type="SUPFAM" id="SSF51161">
    <property type="entry name" value="Trimeric LpxA-like enzymes"/>
    <property type="match status" value="1"/>
</dbReference>
<sequence length="274" mass="29754">MQSLQQNIETAFEQRAAITPANVDATTRDAVNQVIAALDSGTLRVAEKINGEWVTHQWLKKAVLLSFRIADNQLIEGGETRFFDKVPMKFAGWDSERFQREGFRVVPPASVRQGAYIARNTVLMPSYVNIGAYVDESTMVDTWATVGSCAQIGKNVHLSGGAGIGGVLEPLQANPTIIEDNCFIGARSEMVEGVIVEEGSVISMGVFIGQSTKIYDRETGEVHYGRVPAGSVVVSGNLPSKDGRYSLYCAVIVKKVDAKTRGKVGINELLRTID</sequence>
<comment type="catalytic activity">
    <reaction evidence="1">
        <text>(S)-2,3,4,5-tetrahydrodipicolinate + succinyl-CoA + H2O = (S)-2-succinylamino-6-oxoheptanedioate + CoA</text>
        <dbReference type="Rhea" id="RHEA:17325"/>
        <dbReference type="ChEBI" id="CHEBI:15377"/>
        <dbReference type="ChEBI" id="CHEBI:15685"/>
        <dbReference type="ChEBI" id="CHEBI:16845"/>
        <dbReference type="ChEBI" id="CHEBI:57287"/>
        <dbReference type="ChEBI" id="CHEBI:57292"/>
        <dbReference type="EC" id="2.3.1.117"/>
    </reaction>
</comment>
<comment type="pathway">
    <text evidence="1">Amino-acid biosynthesis; L-lysine biosynthesis via DAP pathway; LL-2,6-diaminopimelate from (S)-tetrahydrodipicolinate (succinylase route): step 1/3.</text>
</comment>
<comment type="subunit">
    <text evidence="1">Homotrimer.</text>
</comment>
<comment type="subcellular location">
    <subcellularLocation>
        <location evidence="1">Cytoplasm</location>
    </subcellularLocation>
</comment>
<comment type="similarity">
    <text evidence="1">Belongs to the transferase hexapeptide repeat family.</text>
</comment>
<organism>
    <name type="scientific">Sodalis glossinidius (strain morsitans)</name>
    <dbReference type="NCBI Taxonomy" id="343509"/>
    <lineage>
        <taxon>Bacteria</taxon>
        <taxon>Pseudomonadati</taxon>
        <taxon>Pseudomonadota</taxon>
        <taxon>Gammaproteobacteria</taxon>
        <taxon>Enterobacterales</taxon>
        <taxon>Bruguierivoracaceae</taxon>
        <taxon>Sodalis</taxon>
    </lineage>
</organism>
<name>DAPD_SODGM</name>
<evidence type="ECO:0000255" key="1">
    <source>
        <dbReference type="HAMAP-Rule" id="MF_00811"/>
    </source>
</evidence>
<feature type="chain" id="PRO_1000047196" description="2,3,4,5-tetrahydropyridine-2,6-dicarboxylate N-succinyltransferase">
    <location>
        <begin position="1"/>
        <end position="274"/>
    </location>
</feature>
<feature type="binding site" evidence="1">
    <location>
        <position position="104"/>
    </location>
    <ligand>
        <name>substrate</name>
    </ligand>
</feature>
<feature type="binding site" evidence="1">
    <location>
        <position position="141"/>
    </location>
    <ligand>
        <name>substrate</name>
    </ligand>
</feature>
<accession>Q2NRK4</accession>
<protein>
    <recommendedName>
        <fullName evidence="1">2,3,4,5-tetrahydropyridine-2,6-dicarboxylate N-succinyltransferase</fullName>
        <ecNumber evidence="1">2.3.1.117</ecNumber>
    </recommendedName>
    <alternativeName>
        <fullName evidence="1">Tetrahydrodipicolinate N-succinyltransferase</fullName>
        <shortName evidence="1">THDP succinyltransferase</shortName>
        <shortName evidence="1">THP succinyltransferase</shortName>
        <shortName evidence="1">Tetrahydropicolinate succinylase</shortName>
    </alternativeName>
</protein>
<reference key="1">
    <citation type="journal article" date="2006" name="Genome Res.">
        <title>Massive genome erosion and functional adaptations provide insights into the symbiotic lifestyle of Sodalis glossinidius in the tsetse host.</title>
        <authorList>
            <person name="Toh H."/>
            <person name="Weiss B.L."/>
            <person name="Perkin S.A.H."/>
            <person name="Yamashita A."/>
            <person name="Oshima K."/>
            <person name="Hattori M."/>
            <person name="Aksoy S."/>
        </authorList>
    </citation>
    <scope>NUCLEOTIDE SEQUENCE [LARGE SCALE GENOMIC DNA]</scope>
    <source>
        <strain>morsitans</strain>
    </source>
</reference>